<feature type="signal peptide" evidence="1">
    <location>
        <begin position="1"/>
        <end position="32"/>
    </location>
</feature>
<feature type="chain" id="PRO_0000361670" description="Putative lipoprotein LppA">
    <location>
        <begin position="33"/>
        <end position="219"/>
    </location>
</feature>
<feature type="lipid moiety-binding region" description="N-palmitoyl cysteine" evidence="1">
    <location>
        <position position="33"/>
    </location>
</feature>
<feature type="lipid moiety-binding region" description="S-diacylglycerol cysteine" evidence="1">
    <location>
        <position position="33"/>
    </location>
</feature>
<feature type="helix" evidence="3">
    <location>
        <begin position="41"/>
        <end position="57"/>
    </location>
</feature>
<feature type="helix" evidence="3">
    <location>
        <begin position="58"/>
        <end position="60"/>
    </location>
</feature>
<feature type="helix" evidence="3">
    <location>
        <begin position="63"/>
        <end position="84"/>
    </location>
</feature>
<feature type="strand" evidence="3">
    <location>
        <begin position="90"/>
        <end position="92"/>
    </location>
</feature>
<feature type="helix" evidence="3">
    <location>
        <begin position="96"/>
        <end position="104"/>
    </location>
</feature>
<feature type="strand" evidence="3">
    <location>
        <begin position="109"/>
        <end position="111"/>
    </location>
</feature>
<feature type="turn" evidence="3">
    <location>
        <begin position="113"/>
        <end position="115"/>
    </location>
</feature>
<feature type="strand" evidence="3">
    <location>
        <begin position="116"/>
        <end position="118"/>
    </location>
</feature>
<feature type="strand" evidence="3">
    <location>
        <begin position="124"/>
        <end position="128"/>
    </location>
</feature>
<feature type="helix" evidence="3">
    <location>
        <begin position="132"/>
        <end position="147"/>
    </location>
</feature>
<feature type="turn" evidence="3">
    <location>
        <begin position="148"/>
        <end position="150"/>
    </location>
</feature>
<feature type="strand" evidence="3">
    <location>
        <begin position="153"/>
        <end position="155"/>
    </location>
</feature>
<feature type="strand" evidence="3">
    <location>
        <begin position="159"/>
        <end position="162"/>
    </location>
</feature>
<feature type="strand" evidence="3">
    <location>
        <begin position="164"/>
        <end position="170"/>
    </location>
</feature>
<feature type="strand" evidence="3">
    <location>
        <begin position="173"/>
        <end position="188"/>
    </location>
</feature>
<feature type="helix" evidence="3">
    <location>
        <begin position="195"/>
        <end position="198"/>
    </location>
</feature>
<name>LPPA_MYCTU</name>
<protein>
    <recommendedName>
        <fullName>Putative lipoprotein LppA</fullName>
    </recommendedName>
</protein>
<organism>
    <name type="scientific">Mycobacterium tuberculosis (strain ATCC 25618 / H37Rv)</name>
    <dbReference type="NCBI Taxonomy" id="83332"/>
    <lineage>
        <taxon>Bacteria</taxon>
        <taxon>Bacillati</taxon>
        <taxon>Actinomycetota</taxon>
        <taxon>Actinomycetes</taxon>
        <taxon>Mycobacteriales</taxon>
        <taxon>Mycobacteriaceae</taxon>
        <taxon>Mycobacterium</taxon>
        <taxon>Mycobacterium tuberculosis complex</taxon>
    </lineage>
</organism>
<comment type="subcellular location">
    <subcellularLocation>
        <location evidence="2">Cell membrane</location>
        <topology evidence="2">Lipid-anchor</topology>
    </subcellularLocation>
</comment>
<comment type="similarity">
    <text evidence="2">Belongs to the mycobacteriales LppA/LppB family.</text>
</comment>
<reference key="1">
    <citation type="journal article" date="1998" name="Nature">
        <title>Deciphering the biology of Mycobacterium tuberculosis from the complete genome sequence.</title>
        <authorList>
            <person name="Cole S.T."/>
            <person name="Brosch R."/>
            <person name="Parkhill J."/>
            <person name="Garnier T."/>
            <person name="Churcher C.M."/>
            <person name="Harris D.E."/>
            <person name="Gordon S.V."/>
            <person name="Eiglmeier K."/>
            <person name="Gas S."/>
            <person name="Barry C.E. III"/>
            <person name="Tekaia F."/>
            <person name="Badcock K."/>
            <person name="Basham D."/>
            <person name="Brown D."/>
            <person name="Chillingworth T."/>
            <person name="Connor R."/>
            <person name="Davies R.M."/>
            <person name="Devlin K."/>
            <person name="Feltwell T."/>
            <person name="Gentles S."/>
            <person name="Hamlin N."/>
            <person name="Holroyd S."/>
            <person name="Hornsby T."/>
            <person name="Jagels K."/>
            <person name="Krogh A."/>
            <person name="McLean J."/>
            <person name="Moule S."/>
            <person name="Murphy L.D."/>
            <person name="Oliver S."/>
            <person name="Osborne J."/>
            <person name="Quail M.A."/>
            <person name="Rajandream M.A."/>
            <person name="Rogers J."/>
            <person name="Rutter S."/>
            <person name="Seeger K."/>
            <person name="Skelton S."/>
            <person name="Squares S."/>
            <person name="Squares R."/>
            <person name="Sulston J.E."/>
            <person name="Taylor K."/>
            <person name="Whitehead S."/>
            <person name="Barrell B.G."/>
        </authorList>
    </citation>
    <scope>NUCLEOTIDE SEQUENCE [LARGE SCALE GENOMIC DNA]</scope>
    <source>
        <strain>ATCC 25618 / H37Rv</strain>
    </source>
</reference>
<reference key="2">
    <citation type="journal article" date="2011" name="Mol. Cell. Proteomics">
        <title>Proteogenomic analysis of Mycobacterium tuberculosis by high resolution mass spectrometry.</title>
        <authorList>
            <person name="Kelkar D.S."/>
            <person name="Kumar D."/>
            <person name="Kumar P."/>
            <person name="Balakrishnan L."/>
            <person name="Muthusamy B."/>
            <person name="Yadav A.K."/>
            <person name="Shrivastava P."/>
            <person name="Marimuthu A."/>
            <person name="Anand S."/>
            <person name="Sundaram H."/>
            <person name="Kingsbury R."/>
            <person name="Harsha H.C."/>
            <person name="Nair B."/>
            <person name="Prasad T.S."/>
            <person name="Chauhan D.S."/>
            <person name="Katoch K."/>
            <person name="Katoch V.M."/>
            <person name="Kumar P."/>
            <person name="Chaerkady R."/>
            <person name="Ramachandran S."/>
            <person name="Dash D."/>
            <person name="Pandey A."/>
        </authorList>
    </citation>
    <scope>IDENTIFICATION BY MASS SPECTROMETRY [LARGE SCALE ANALYSIS]</scope>
    <source>
        <strain>ATCC 25618 / H37Rv</strain>
    </source>
</reference>
<reference key="3">
    <citation type="submission" date="2008-08" db="PDB data bank">
        <title>Crystal structure of the putative lipoprotein lppA from Mycobacterium tuberculosis.</title>
        <authorList>
            <person name="Grana M."/>
            <person name="Miras I."/>
            <person name="Haouz A."/>
            <person name="Winter N."/>
            <person name="Buschiazzo A."/>
            <person name="Bellinzoni M."/>
            <person name="Alzari P.M."/>
        </authorList>
    </citation>
    <scope>X-RAY CRYSTALLOGRAPHY (1.96 ANGSTROMS) OF 34-219</scope>
    <source>
        <strain>ATCC 25618 / H37Rv</strain>
    </source>
</reference>
<accession>P9WK81</accession>
<accession>L0TCP2</accession>
<accession>P95010</accession>
<accession>Q7D6Y4</accession>
<proteinExistence type="evidence at protein level"/>
<gene>
    <name type="primary">lppA</name>
    <name type="ordered locus">Rv2543</name>
</gene>
<dbReference type="EMBL" id="AL123456">
    <property type="protein sequence ID" value="CCP45338.1"/>
    <property type="molecule type" value="Genomic_DNA"/>
</dbReference>
<dbReference type="PIR" id="C70659">
    <property type="entry name" value="C70659"/>
</dbReference>
<dbReference type="RefSeq" id="NP_217059.1">
    <property type="nucleotide sequence ID" value="NC_000962.3"/>
</dbReference>
<dbReference type="RefSeq" id="WP_003900846.1">
    <property type="nucleotide sequence ID" value="NZ_NVQJ01000032.1"/>
</dbReference>
<dbReference type="PDB" id="2V7S">
    <property type="method" value="X-ray"/>
    <property type="resolution" value="1.96 A"/>
    <property type="chains" value="A=34-219"/>
</dbReference>
<dbReference type="PDBsum" id="2V7S"/>
<dbReference type="SMR" id="P9WK81"/>
<dbReference type="STRING" id="83332.Rv2543"/>
<dbReference type="PaxDb" id="83332-Rv2543"/>
<dbReference type="DNASU" id="888052"/>
<dbReference type="GeneID" id="888052"/>
<dbReference type="KEGG" id="mtu:Rv2543"/>
<dbReference type="KEGG" id="mtv:RVBD_2543"/>
<dbReference type="TubercuList" id="Rv2543"/>
<dbReference type="eggNOG" id="ENOG5031J3X">
    <property type="taxonomic scope" value="Bacteria"/>
</dbReference>
<dbReference type="InParanoid" id="P9WK81"/>
<dbReference type="OrthoDB" id="4619512at2"/>
<dbReference type="PhylomeDB" id="P9WK81"/>
<dbReference type="EvolutionaryTrace" id="P9WK81"/>
<dbReference type="Proteomes" id="UP000001584">
    <property type="component" value="Chromosome"/>
</dbReference>
<dbReference type="GO" id="GO:0005886">
    <property type="term" value="C:plasma membrane"/>
    <property type="evidence" value="ECO:0007669"/>
    <property type="project" value="UniProtKB-SubCell"/>
</dbReference>
<dbReference type="Gene3D" id="3.30.2030.20">
    <property type="match status" value="1"/>
</dbReference>
<dbReference type="InterPro" id="IPR032018">
    <property type="entry name" value="LppA/LppB/LprP"/>
</dbReference>
<dbReference type="Pfam" id="PF16708">
    <property type="entry name" value="LppA"/>
    <property type="match status" value="1"/>
</dbReference>
<sequence length="219" mass="24180">MIAPQPISRTLPRWQRIVALTMIGISTALIGGCTMDHNPDTSRRLTGEQKIQLIDSMRNKGSYEAARERLTATARIIADRVSAAIPGQTWKFDDDPNIQQSDRNGALCDKLTADIARRPIANSVMFGATFSAEDFKIAANIVREEAAKYGATTESSLFNESAKRDYDVQGNGYEFRLLQIKFATLNITGDCFLLQKVLDLPAGQLPPEPPIWPTTSTPH</sequence>
<keyword id="KW-0002">3D-structure</keyword>
<keyword id="KW-1003">Cell membrane</keyword>
<keyword id="KW-0449">Lipoprotein</keyword>
<keyword id="KW-0472">Membrane</keyword>
<keyword id="KW-0564">Palmitate</keyword>
<keyword id="KW-1185">Reference proteome</keyword>
<keyword id="KW-0732">Signal</keyword>
<evidence type="ECO:0000255" key="1"/>
<evidence type="ECO:0000305" key="2"/>
<evidence type="ECO:0007829" key="3">
    <source>
        <dbReference type="PDB" id="2V7S"/>
    </source>
</evidence>